<name>UBIQD_DICDI</name>
<reference key="1">
    <citation type="journal article" date="1989" name="Biochemistry">
        <title>Molecular organization of developmentally regulated Dictyostelium discoideum ubiquitin cDNAs.</title>
        <authorList>
            <person name="Ohmachi T."/>
            <person name="Giorda R."/>
            <person name="Shaw D.R."/>
            <person name="Ennis H.L."/>
        </authorList>
    </citation>
    <scope>NUCLEOTIDE SEQUENCE [MRNA]</scope>
</reference>
<reference key="2">
    <citation type="journal article" date="1987" name="Mol. Cell. Biol.">
        <title>Structure of two developmentally regulated Dictyostelium discoideum ubiquitin genes.</title>
        <authorList>
            <person name="Giorda R."/>
            <person name="Ennis H.L."/>
        </authorList>
    </citation>
    <scope>NUCLEOTIDE SEQUENCE [GENOMIC DNA]</scope>
</reference>
<reference key="3">
    <citation type="journal article" date="2005" name="Nature">
        <title>The genome of the social amoeba Dictyostelium discoideum.</title>
        <authorList>
            <person name="Eichinger L."/>
            <person name="Pachebat J.A."/>
            <person name="Gloeckner G."/>
            <person name="Rajandream M.A."/>
            <person name="Sucgang R."/>
            <person name="Berriman M."/>
            <person name="Song J."/>
            <person name="Olsen R."/>
            <person name="Szafranski K."/>
            <person name="Xu Q."/>
            <person name="Tunggal B."/>
            <person name="Kummerfeld S."/>
            <person name="Madera M."/>
            <person name="Konfortov B.A."/>
            <person name="Rivero F."/>
            <person name="Bankier A.T."/>
            <person name="Lehmann R."/>
            <person name="Hamlin N."/>
            <person name="Davies R."/>
            <person name="Gaudet P."/>
            <person name="Fey P."/>
            <person name="Pilcher K."/>
            <person name="Chen G."/>
            <person name="Saunders D."/>
            <person name="Sodergren E.J."/>
            <person name="Davis P."/>
            <person name="Kerhornou A."/>
            <person name="Nie X."/>
            <person name="Hall N."/>
            <person name="Anjard C."/>
            <person name="Hemphill L."/>
            <person name="Bason N."/>
            <person name="Farbrother P."/>
            <person name="Desany B."/>
            <person name="Just E."/>
            <person name="Morio T."/>
            <person name="Rost R."/>
            <person name="Churcher C.M."/>
            <person name="Cooper J."/>
            <person name="Haydock S."/>
            <person name="van Driessche N."/>
            <person name="Cronin A."/>
            <person name="Goodhead I."/>
            <person name="Muzny D.M."/>
            <person name="Mourier T."/>
            <person name="Pain A."/>
            <person name="Lu M."/>
            <person name="Harper D."/>
            <person name="Lindsay R."/>
            <person name="Hauser H."/>
            <person name="James K.D."/>
            <person name="Quiles M."/>
            <person name="Madan Babu M."/>
            <person name="Saito T."/>
            <person name="Buchrieser C."/>
            <person name="Wardroper A."/>
            <person name="Felder M."/>
            <person name="Thangavelu M."/>
            <person name="Johnson D."/>
            <person name="Knights A."/>
            <person name="Loulseged H."/>
            <person name="Mungall K.L."/>
            <person name="Oliver K."/>
            <person name="Price C."/>
            <person name="Quail M.A."/>
            <person name="Urushihara H."/>
            <person name="Hernandez J."/>
            <person name="Rabbinowitsch E."/>
            <person name="Steffen D."/>
            <person name="Sanders M."/>
            <person name="Ma J."/>
            <person name="Kohara Y."/>
            <person name="Sharp S."/>
            <person name="Simmonds M.N."/>
            <person name="Spiegler S."/>
            <person name="Tivey A."/>
            <person name="Sugano S."/>
            <person name="White B."/>
            <person name="Walker D."/>
            <person name="Woodward J.R."/>
            <person name="Winckler T."/>
            <person name="Tanaka Y."/>
            <person name="Shaulsky G."/>
            <person name="Schleicher M."/>
            <person name="Weinstock G.M."/>
            <person name="Rosenthal A."/>
            <person name="Cox E.C."/>
            <person name="Chisholm R.L."/>
            <person name="Gibbs R.A."/>
            <person name="Loomis W.F."/>
            <person name="Platzer M."/>
            <person name="Kay R.R."/>
            <person name="Williams J.G."/>
            <person name="Dear P.H."/>
            <person name="Noegel A.A."/>
            <person name="Barrell B.G."/>
            <person name="Kuspa A."/>
        </authorList>
    </citation>
    <scope>NUCLEOTIDE SEQUENCE [LARGE SCALE GENOMIC DNA]</scope>
    <source>
        <strain>AX4</strain>
    </source>
</reference>
<reference key="4">
    <citation type="journal article" date="2006" name="J. Proteome Res.">
        <title>Identification of novel centrosomal proteins in Dictyostelium discoideum by comparative proteomic approaches.</title>
        <authorList>
            <person name="Reinders Y."/>
            <person name="Schulz I."/>
            <person name="Graef R."/>
            <person name="Sickmann A."/>
        </authorList>
    </citation>
    <scope>IDENTIFICATION BY MASS SPECTROMETRY [LARGE SCALE ANALYSIS]</scope>
</reference>
<protein>
    <recommendedName>
        <fullName>Polyubiquitin-D</fullName>
    </recommendedName>
    <component>
        <recommendedName>
            <fullName>Ubiquitin</fullName>
        </recommendedName>
    </component>
</protein>
<dbReference type="EMBL" id="M23751">
    <property type="protein sequence ID" value="AAA33265.1"/>
    <property type="molecule type" value="mRNA"/>
</dbReference>
<dbReference type="EMBL" id="M23752">
    <property type="protein sequence ID" value="AAA33266.1"/>
    <property type="molecule type" value="mRNA"/>
</dbReference>
<dbReference type="EMBL" id="M19492">
    <property type="protein sequence ID" value="AAA33270.1"/>
    <property type="molecule type" value="Genomic_DNA"/>
</dbReference>
<dbReference type="EMBL" id="AAFI02000092">
    <property type="protein sequence ID" value="EAL63951.1"/>
    <property type="molecule type" value="Genomic_DNA"/>
</dbReference>
<dbReference type="PIR" id="B27806">
    <property type="entry name" value="B27806"/>
</dbReference>
<dbReference type="PIR" id="D34080">
    <property type="entry name" value="D34080"/>
</dbReference>
<dbReference type="RefSeq" id="XP_637465.1">
    <property type="nucleotide sequence ID" value="XM_632373.1"/>
</dbReference>
<dbReference type="SMR" id="P0CG77"/>
<dbReference type="FunCoup" id="P0CG77">
    <property type="interactions" value="129"/>
</dbReference>
<dbReference type="STRING" id="44689.P0CG77"/>
<dbReference type="EnsemblProtists" id="EAL63951">
    <property type="protein sequence ID" value="EAL63951"/>
    <property type="gene ID" value="DDB_G0286907"/>
</dbReference>
<dbReference type="GeneID" id="8625864"/>
<dbReference type="KEGG" id="ddi:DDB_G0286907"/>
<dbReference type="dictyBase" id="DDB_G0286907">
    <property type="gene designation" value="ubqD"/>
</dbReference>
<dbReference type="VEuPathDB" id="AmoebaDB:DDB_G0286907"/>
<dbReference type="eggNOG" id="KOG0001">
    <property type="taxonomic scope" value="Eukaryota"/>
</dbReference>
<dbReference type="HOGENOM" id="CLU_010412_0_0_1"/>
<dbReference type="InParanoid" id="P0CG77"/>
<dbReference type="PhylomeDB" id="P0CG77"/>
<dbReference type="PRO" id="PR:P0CG77"/>
<dbReference type="Proteomes" id="UP000002195">
    <property type="component" value="Chromosome 4"/>
</dbReference>
<dbReference type="GO" id="GO:0005737">
    <property type="term" value="C:cytoplasm"/>
    <property type="evidence" value="ECO:0000318"/>
    <property type="project" value="GO_Central"/>
</dbReference>
<dbReference type="GO" id="GO:0005634">
    <property type="term" value="C:nucleus"/>
    <property type="evidence" value="ECO:0000318"/>
    <property type="project" value="GO_Central"/>
</dbReference>
<dbReference type="GO" id="GO:0031386">
    <property type="term" value="F:protein tag activity"/>
    <property type="evidence" value="ECO:0000318"/>
    <property type="project" value="GO_Central"/>
</dbReference>
<dbReference type="GO" id="GO:0031625">
    <property type="term" value="F:ubiquitin protein ligase binding"/>
    <property type="evidence" value="ECO:0000318"/>
    <property type="project" value="GO_Central"/>
</dbReference>
<dbReference type="GO" id="GO:0019941">
    <property type="term" value="P:modification-dependent protein catabolic process"/>
    <property type="evidence" value="ECO:0000318"/>
    <property type="project" value="GO_Central"/>
</dbReference>
<dbReference type="GO" id="GO:0016567">
    <property type="term" value="P:protein ubiquitination"/>
    <property type="evidence" value="ECO:0000318"/>
    <property type="project" value="GO_Central"/>
</dbReference>
<dbReference type="CDD" id="cd01803">
    <property type="entry name" value="Ubl_ubiquitin"/>
    <property type="match status" value="3"/>
</dbReference>
<dbReference type="FunFam" id="3.10.20.90:FF:000158">
    <property type="entry name" value="Polyubiquitin 5"/>
    <property type="match status" value="1"/>
</dbReference>
<dbReference type="FunFam" id="3.10.20.90:FF:000014">
    <property type="entry name" value="Ubiquitin-60S ribosomal L40 fusion"/>
    <property type="match status" value="2"/>
</dbReference>
<dbReference type="Gene3D" id="3.10.20.90">
    <property type="entry name" value="Phosphatidylinositol 3-kinase Catalytic Subunit, Chain A, domain 1"/>
    <property type="match status" value="3"/>
</dbReference>
<dbReference type="InterPro" id="IPR000626">
    <property type="entry name" value="Ubiquitin-like_dom"/>
</dbReference>
<dbReference type="InterPro" id="IPR029071">
    <property type="entry name" value="Ubiquitin-like_domsf"/>
</dbReference>
<dbReference type="InterPro" id="IPR019954">
    <property type="entry name" value="Ubiquitin_CS"/>
</dbReference>
<dbReference type="InterPro" id="IPR019956">
    <property type="entry name" value="Ubiquitin_dom"/>
</dbReference>
<dbReference type="InterPro" id="IPR050158">
    <property type="entry name" value="Ubiquitin_ubiquitin-like"/>
</dbReference>
<dbReference type="PANTHER" id="PTHR10666">
    <property type="entry name" value="UBIQUITIN"/>
    <property type="match status" value="1"/>
</dbReference>
<dbReference type="Pfam" id="PF00240">
    <property type="entry name" value="ubiquitin"/>
    <property type="match status" value="3"/>
</dbReference>
<dbReference type="PRINTS" id="PR00348">
    <property type="entry name" value="UBIQUITIN"/>
</dbReference>
<dbReference type="SMART" id="SM00213">
    <property type="entry name" value="UBQ"/>
    <property type="match status" value="3"/>
</dbReference>
<dbReference type="SUPFAM" id="SSF54236">
    <property type="entry name" value="Ubiquitin-like"/>
    <property type="match status" value="3"/>
</dbReference>
<dbReference type="PROSITE" id="PS00299">
    <property type="entry name" value="UBIQUITIN_1"/>
    <property type="match status" value="3"/>
</dbReference>
<dbReference type="PROSITE" id="PS50053">
    <property type="entry name" value="UBIQUITIN_2"/>
    <property type="match status" value="3"/>
</dbReference>
<feature type="chain" id="PRO_0000396317" description="Ubiquitin">
    <location>
        <begin position="1"/>
        <end position="76"/>
    </location>
</feature>
<feature type="chain" id="PRO_0000396318" description="Ubiquitin">
    <location>
        <begin position="77"/>
        <end position="152"/>
    </location>
</feature>
<feature type="chain" id="PRO_0000396319" description="Ubiquitin">
    <location>
        <begin position="153"/>
        <end position="228"/>
    </location>
</feature>
<feature type="propeptide" id="PRO_0000396320">
    <location>
        <position position="229"/>
    </location>
</feature>
<feature type="domain" description="Ubiquitin-like 1" evidence="2">
    <location>
        <begin position="1"/>
        <end position="76"/>
    </location>
</feature>
<feature type="domain" description="Ubiquitin-like 2" evidence="2">
    <location>
        <begin position="77"/>
        <end position="152"/>
    </location>
</feature>
<feature type="domain" description="Ubiquitin-like 3" evidence="2">
    <location>
        <begin position="153"/>
        <end position="228"/>
    </location>
</feature>
<feature type="cross-link" description="Glycyl lysine isopeptide (Lys-Gly) (interchain with G-Cter in ubiquitin)" evidence="1">
    <location>
        <position position="48"/>
    </location>
</feature>
<feature type="cross-link" description="Glycyl lysine isopeptide (Gly-Lys) (interchain with K-? in acceptor proteins)" evidence="2">
    <location>
        <position position="76"/>
    </location>
</feature>
<feature type="sequence conflict" description="In Ref. 1; AAA33266." evidence="3" ref="1">
    <original>K</original>
    <variation>N</variation>
    <location>
        <position position="11"/>
    </location>
</feature>
<proteinExistence type="evidence at protein level"/>
<evidence type="ECO:0000250" key="1"/>
<evidence type="ECO:0000255" key="2">
    <source>
        <dbReference type="PROSITE-ProRule" id="PRU00214"/>
    </source>
</evidence>
<evidence type="ECO:0000305" key="3"/>
<keyword id="KW-0963">Cytoplasm</keyword>
<keyword id="KW-1017">Isopeptide bond</keyword>
<keyword id="KW-0539">Nucleus</keyword>
<keyword id="KW-1185">Reference proteome</keyword>
<keyword id="KW-0677">Repeat</keyword>
<keyword id="KW-0832">Ubl conjugation</keyword>
<organism>
    <name type="scientific">Dictyostelium discoideum</name>
    <name type="common">Social amoeba</name>
    <dbReference type="NCBI Taxonomy" id="44689"/>
    <lineage>
        <taxon>Eukaryota</taxon>
        <taxon>Amoebozoa</taxon>
        <taxon>Evosea</taxon>
        <taxon>Eumycetozoa</taxon>
        <taxon>Dictyostelia</taxon>
        <taxon>Dictyosteliales</taxon>
        <taxon>Dictyosteliaceae</taxon>
        <taxon>Dictyostelium</taxon>
    </lineage>
</organism>
<accession>P0CG77</accession>
<accession>P08618</accession>
<accession>Q54HH5</accession>
<accession>Q54L38</accession>
<accession>Q54SE1</accession>
<accession>Q54SP3</accession>
<accession>Q54UW7</accession>
<accession>Q54WJ3</accession>
<accession>Q550W7</accession>
<accession>Q55DZ5</accession>
<accession>Q86KQ4</accession>
<comment type="function">
    <text evidence="1">Ubiquitin exists either covalently attached to another protein, or free (unanchored). When covalently bound, it is conjugated to target proteins via an isopeptide bond either as a monomer (monoubiquitin), a polymer linked via different Lys residues of the ubiquitin (polyubiquitin chains) or a linear polymer linked via the initiator Met of the ubiquitin (linear polyubiquitin chains). Polyubiquitin chains, when attached to a target protein, have different functions depending on the Lys residue of the ubiquitin that is linked: Lys-48-linked is involved in protein degradation via the proteasome. Linear polymer chains formed via attachment by the initiator Met lead to cell signaling. Ubiquitin is usually conjugated to Lys residues of target proteins, however, in rare cases, conjugation to Cys or Ser residues has been observed. When polyubiquitin is free (unanchored-polyubiquitin), it also has distinct roles, such as in activation of protein kinases, and in signaling (By similarity).</text>
</comment>
<comment type="subcellular location">
    <subcellularLocation>
        <location evidence="1">Cytoplasm</location>
    </subcellularLocation>
    <subcellularLocation>
        <location evidence="1">Nucleus</location>
    </subcellularLocation>
</comment>
<comment type="miscellaneous">
    <text>Ubiquitin is synthesized as a polyubiquitin precursor with exact head to tail repeats. Some ubiquitin genes contain a single copy of ubiquitin fused to a ribosomal protein. In D.discoideum there are 9 genes: ubqA: 5 copies of Ub and a final Asn; ubqB: 1 copy of Ub and ribosomal protein eL40; ubqC: 1 copy of Ub and ribosomal protein eS31; ubqD: 3 copies of Ub and a final Leu; ubqF: 7 copies of Ub and a final Asn; ubqG: 5 copies of Ub and a final Leu; ubqH: 5 copies of Ub and a final Asn; ubqI: 4 copies of Ub and a final Asn; ubqJ: 4 copies of Ub and a final Asn.</text>
</comment>
<comment type="miscellaneous">
    <text>For the sake of clarity sequence features are annotated only for the first chain, and are not repeated for each of the following chains.</text>
</comment>
<comment type="similarity">
    <text evidence="3">Belongs to the ubiquitin family.</text>
</comment>
<gene>
    <name type="primary">ubqD</name>
    <name type="synonym">ubqE</name>
    <name type="ORF">DDB_G0286907</name>
</gene>
<sequence length="229" mass="25690">MQIFVKTLTGKTITLEVEGSDNIENVKAKIQDKEGIPPDQQRLIFAGKQLEDGRTLSDYNIQKESTLHLVLRLRGGMQIFVKTLTGKTITLEVEGSDNIENVKAKIQDKEGIPPDQQRLIFAGKQLEDGRTLSDYNIQKESTLHLVLRLRGGMQIFVKTLTGKTITLEVEGSDNIENVKAKIQDKEGIPPDQQRLIFAGKQLEDGRTLSDYNIQKESTLHLVLRLRGGL</sequence>